<comment type="function">
    <text evidence="1">May supply 2-oxoglutarate for amino acid biosynthesis and ammonia assimilation via the glutamine synthetase/glutamate synthase (GS/GOGAT) pathway.</text>
</comment>
<comment type="catalytic activity">
    <reaction>
        <text>D-threo-isocitrate + NADP(+) = 2-oxoglutarate + CO2 + NADPH</text>
        <dbReference type="Rhea" id="RHEA:19629"/>
        <dbReference type="ChEBI" id="CHEBI:15562"/>
        <dbReference type="ChEBI" id="CHEBI:16526"/>
        <dbReference type="ChEBI" id="CHEBI:16810"/>
        <dbReference type="ChEBI" id="CHEBI:57783"/>
        <dbReference type="ChEBI" id="CHEBI:58349"/>
        <dbReference type="EC" id="1.1.1.42"/>
    </reaction>
</comment>
<comment type="cofactor">
    <cofactor evidence="1">
        <name>Mg(2+)</name>
        <dbReference type="ChEBI" id="CHEBI:18420"/>
    </cofactor>
    <cofactor evidence="1">
        <name>Mn(2+)</name>
        <dbReference type="ChEBI" id="CHEBI:29035"/>
    </cofactor>
    <text evidence="1">Binds 1 Mg(2+) or Mn(2+) ion per subunit.</text>
</comment>
<comment type="subunit">
    <text evidence="1">Heterodimer.</text>
</comment>
<comment type="subcellular location">
    <subcellularLocation>
        <location evidence="1">Cytoplasm</location>
    </subcellularLocation>
</comment>
<comment type="similarity">
    <text evidence="2">Belongs to the isocitrate and isopropylmalate dehydrogenases family.</text>
</comment>
<comment type="sequence caution" evidence="2">
    <conflict type="erroneous initiation">
        <sequence resource="EMBL-CDS" id="CAA53300"/>
    </conflict>
    <text>Extended N-terminus.</text>
</comment>
<protein>
    <recommendedName>
        <fullName>Isocitrate dehydrogenase [NADP]</fullName>
        <shortName>IDH</shortName>
        <ecNumber>1.1.1.42</ecNumber>
    </recommendedName>
    <alternativeName>
        <fullName>IDP</fullName>
    </alternativeName>
    <alternativeName>
        <fullName>NADP(+)-specific ICDH</fullName>
    </alternativeName>
    <alternativeName>
        <fullName>Oxalosuccinate decarboxylase</fullName>
    </alternativeName>
</protein>
<name>IDHC_SOLTU</name>
<sequence>MAFQKITVQNPIVEMDGDEMTRVIWKSIKDKLILPFLELDIKYFSLGLPHRDATDDKVTVESAEATQKYNVAIKCATITPDEARVKEFNLKSMWRSPNGTIRNILNGTVFREPIMCKNIPRLVPGWTKPICIGRHAFGDQYRATDTVIKGAGKLKLVFVPEGSDEKTEFEVYNFTGAGGVALSMYNTDESVRSFAEASMNMAFQKKWPLYLSTKNTILKKYDGRFKDIFQEVYEANWKSKYEEAGIWYEHRLIDDMVAYALKSEGGYVWACKNYDGDVQSDFLAQGFGSLGLMTSVLVCPDGKTIEAEAAHGTVTRHYRVHQKGGETSTNSIASIFAWTRGLAHRATLDNNERLLDFTEKLEAACIGAVESGKMTKDLALIIIHGSKLSREHYLNTEEFIDAVADELKARLLKAKA</sequence>
<proteinExistence type="evidence at transcript level"/>
<accession>P50217</accession>
<reference key="1">
    <citation type="journal article" date="1995" name="Plant Physiol.">
        <title>Cloning and expression analysis of the cytosolic NADP(+)-dependent isocitrate dehydrogenase from potato. Implications for nitrogen metabolism.</title>
        <authorList>
            <person name="Fieuw S."/>
            <person name="Mueller-Roeber B."/>
            <person name="Galvez S."/>
            <person name="Willmitzer L."/>
        </authorList>
    </citation>
    <scope>NUCLEOTIDE SEQUENCE [MRNA]</scope>
    <source>
        <strain>cv. Desiree</strain>
        <tissue>Leaf</tissue>
    </source>
</reference>
<keyword id="KW-0963">Cytoplasm</keyword>
<keyword id="KW-0329">Glyoxylate bypass</keyword>
<keyword id="KW-0460">Magnesium</keyword>
<keyword id="KW-0464">Manganese</keyword>
<keyword id="KW-0479">Metal-binding</keyword>
<keyword id="KW-0521">NADP</keyword>
<keyword id="KW-0560">Oxidoreductase</keyword>
<keyword id="KW-1185">Reference proteome</keyword>
<keyword id="KW-0816">Tricarboxylic acid cycle</keyword>
<evidence type="ECO:0000250" key="1"/>
<evidence type="ECO:0000305" key="2"/>
<feature type="chain" id="PRO_0000083584" description="Isocitrate dehydrogenase [NADP]">
    <location>
        <begin position="1"/>
        <end position="416"/>
    </location>
</feature>
<feature type="binding site" evidence="1">
    <location>
        <begin position="77"/>
        <end position="79"/>
    </location>
    <ligand>
        <name>NADP(+)</name>
        <dbReference type="ChEBI" id="CHEBI:58349"/>
    </ligand>
</feature>
<feature type="binding site" evidence="1">
    <location>
        <position position="79"/>
    </location>
    <ligand>
        <name>substrate</name>
    </ligand>
</feature>
<feature type="binding site" evidence="1">
    <location>
        <position position="84"/>
    </location>
    <ligand>
        <name>NADP(+)</name>
        <dbReference type="ChEBI" id="CHEBI:58349"/>
    </ligand>
</feature>
<feature type="binding site" evidence="1">
    <location>
        <begin position="96"/>
        <end position="102"/>
    </location>
    <ligand>
        <name>substrate</name>
    </ligand>
</feature>
<feature type="binding site" evidence="1">
    <location>
        <position position="111"/>
    </location>
    <ligand>
        <name>substrate</name>
    </ligand>
</feature>
<feature type="binding site" evidence="1">
    <location>
        <position position="134"/>
    </location>
    <ligand>
        <name>substrate</name>
    </ligand>
</feature>
<feature type="binding site" evidence="1">
    <location>
        <position position="254"/>
    </location>
    <ligand>
        <name>Mn(2+)</name>
        <dbReference type="ChEBI" id="CHEBI:29035"/>
    </ligand>
</feature>
<feature type="binding site" evidence="1">
    <location>
        <position position="262"/>
    </location>
    <ligand>
        <name>NADP(+)</name>
        <dbReference type="ChEBI" id="CHEBI:58349"/>
    </ligand>
</feature>
<feature type="binding site" evidence="1">
    <location>
        <position position="277"/>
    </location>
    <ligand>
        <name>Mn(2+)</name>
        <dbReference type="ChEBI" id="CHEBI:29035"/>
    </ligand>
</feature>
<feature type="binding site" evidence="1">
    <location>
        <begin position="312"/>
        <end position="317"/>
    </location>
    <ligand>
        <name>NADP(+)</name>
        <dbReference type="ChEBI" id="CHEBI:58349"/>
    </ligand>
</feature>
<feature type="binding site" evidence="1">
    <location>
        <position position="330"/>
    </location>
    <ligand>
        <name>NADP(+)</name>
        <dbReference type="ChEBI" id="CHEBI:58349"/>
    </ligand>
</feature>
<feature type="site" description="Critical for catalysis" evidence="1">
    <location>
        <position position="141"/>
    </location>
</feature>
<feature type="site" description="Critical for catalysis" evidence="1">
    <location>
        <position position="214"/>
    </location>
</feature>
<organism>
    <name type="scientific">Solanum tuberosum</name>
    <name type="common">Potato</name>
    <dbReference type="NCBI Taxonomy" id="4113"/>
    <lineage>
        <taxon>Eukaryota</taxon>
        <taxon>Viridiplantae</taxon>
        <taxon>Streptophyta</taxon>
        <taxon>Embryophyta</taxon>
        <taxon>Tracheophyta</taxon>
        <taxon>Spermatophyta</taxon>
        <taxon>Magnoliopsida</taxon>
        <taxon>eudicotyledons</taxon>
        <taxon>Gunneridae</taxon>
        <taxon>Pentapetalae</taxon>
        <taxon>asterids</taxon>
        <taxon>lamiids</taxon>
        <taxon>Solanales</taxon>
        <taxon>Solanaceae</taxon>
        <taxon>Solanoideae</taxon>
        <taxon>Solaneae</taxon>
        <taxon>Solanum</taxon>
    </lineage>
</organism>
<dbReference type="EC" id="1.1.1.42"/>
<dbReference type="EMBL" id="X75638">
    <property type="protein sequence ID" value="CAA53300.1"/>
    <property type="status" value="ALT_INIT"/>
    <property type="molecule type" value="mRNA"/>
</dbReference>
<dbReference type="PIR" id="S47013">
    <property type="entry name" value="S47013"/>
</dbReference>
<dbReference type="PIR" id="T07402">
    <property type="entry name" value="T07402"/>
</dbReference>
<dbReference type="SMR" id="P50217"/>
<dbReference type="FunCoup" id="P50217">
    <property type="interactions" value="2379"/>
</dbReference>
<dbReference type="STRING" id="4113.P50217"/>
<dbReference type="PaxDb" id="4113-PGSC0003DMT400081790"/>
<dbReference type="eggNOG" id="KOG1526">
    <property type="taxonomic scope" value="Eukaryota"/>
</dbReference>
<dbReference type="InParanoid" id="P50217"/>
<dbReference type="Proteomes" id="UP000011115">
    <property type="component" value="Unassembled WGS sequence"/>
</dbReference>
<dbReference type="ExpressionAtlas" id="P50217">
    <property type="expression patterns" value="baseline"/>
</dbReference>
<dbReference type="GO" id="GO:0005739">
    <property type="term" value="C:mitochondrion"/>
    <property type="evidence" value="ECO:0000318"/>
    <property type="project" value="GO_Central"/>
</dbReference>
<dbReference type="GO" id="GO:0004450">
    <property type="term" value="F:isocitrate dehydrogenase (NADP+) activity"/>
    <property type="evidence" value="ECO:0000318"/>
    <property type="project" value="GO_Central"/>
</dbReference>
<dbReference type="GO" id="GO:0000287">
    <property type="term" value="F:magnesium ion binding"/>
    <property type="evidence" value="ECO:0007669"/>
    <property type="project" value="InterPro"/>
</dbReference>
<dbReference type="GO" id="GO:0051287">
    <property type="term" value="F:NAD binding"/>
    <property type="evidence" value="ECO:0007669"/>
    <property type="project" value="InterPro"/>
</dbReference>
<dbReference type="GO" id="GO:0006097">
    <property type="term" value="P:glyoxylate cycle"/>
    <property type="evidence" value="ECO:0007669"/>
    <property type="project" value="UniProtKB-KW"/>
</dbReference>
<dbReference type="GO" id="GO:0006102">
    <property type="term" value="P:isocitrate metabolic process"/>
    <property type="evidence" value="ECO:0000318"/>
    <property type="project" value="GO_Central"/>
</dbReference>
<dbReference type="GO" id="GO:0006739">
    <property type="term" value="P:NADP metabolic process"/>
    <property type="evidence" value="ECO:0000318"/>
    <property type="project" value="GO_Central"/>
</dbReference>
<dbReference type="GO" id="GO:0006099">
    <property type="term" value="P:tricarboxylic acid cycle"/>
    <property type="evidence" value="ECO:0007669"/>
    <property type="project" value="UniProtKB-KW"/>
</dbReference>
<dbReference type="FunFam" id="3.40.718.10:FF:000007">
    <property type="entry name" value="Isocitrate dehydrogenase [NADP]"/>
    <property type="match status" value="1"/>
</dbReference>
<dbReference type="Gene3D" id="3.40.718.10">
    <property type="entry name" value="Isopropylmalate Dehydrogenase"/>
    <property type="match status" value="1"/>
</dbReference>
<dbReference type="InterPro" id="IPR019818">
    <property type="entry name" value="IsoCit/isopropylmalate_DH_CS"/>
</dbReference>
<dbReference type="InterPro" id="IPR004790">
    <property type="entry name" value="Isocitrate_DH_NADP"/>
</dbReference>
<dbReference type="InterPro" id="IPR024084">
    <property type="entry name" value="IsoPropMal-DH-like_dom"/>
</dbReference>
<dbReference type="NCBIfam" id="TIGR00127">
    <property type="entry name" value="nadp_idh_euk"/>
    <property type="match status" value="1"/>
</dbReference>
<dbReference type="NCBIfam" id="NF006156">
    <property type="entry name" value="PRK08299.1"/>
    <property type="match status" value="1"/>
</dbReference>
<dbReference type="PANTHER" id="PTHR11822:SF21">
    <property type="entry name" value="ISOCITRATE DEHYDROGENASE [NADP], MITOCHONDRIAL"/>
    <property type="match status" value="1"/>
</dbReference>
<dbReference type="PANTHER" id="PTHR11822">
    <property type="entry name" value="NADP-SPECIFIC ISOCITRATE DEHYDROGENASE"/>
    <property type="match status" value="1"/>
</dbReference>
<dbReference type="Pfam" id="PF00180">
    <property type="entry name" value="Iso_dh"/>
    <property type="match status" value="1"/>
</dbReference>
<dbReference type="PIRSF" id="PIRSF000108">
    <property type="entry name" value="IDH_NADP"/>
    <property type="match status" value="1"/>
</dbReference>
<dbReference type="SMART" id="SM01329">
    <property type="entry name" value="Iso_dh"/>
    <property type="match status" value="1"/>
</dbReference>
<dbReference type="SUPFAM" id="SSF53659">
    <property type="entry name" value="Isocitrate/Isopropylmalate dehydrogenase-like"/>
    <property type="match status" value="1"/>
</dbReference>
<dbReference type="PROSITE" id="PS00470">
    <property type="entry name" value="IDH_IMDH"/>
    <property type="match status" value="1"/>
</dbReference>
<gene>
    <name type="primary">ICDH-1</name>
</gene>